<protein>
    <recommendedName>
        <fullName evidence="6">Alkaline/neutral invertase E, chloroplastic</fullName>
        <shortName evidence="5">A/N-INVE</shortName>
        <ecNumber evidence="4">3.2.1.26</ecNumber>
    </recommendedName>
</protein>
<comment type="function">
    <text evidence="3 4">Chloroplastic invertase that cleaves sucrose into glucose and fructose and is associated with the development of the photosynthetic apparatus and the assimilation of nitrogen in seedlings to control the sucrose to hexose ratio (PubMed:20304912). Participates in the carbon flux between the cytosol and plastids in leaves (PubMed:18034262).</text>
</comment>
<comment type="catalytic activity">
    <reaction evidence="4">
        <text>Hydrolysis of terminal non-reducing beta-D-fructofuranoside residues in beta-D-fructofuranosides.</text>
        <dbReference type="EC" id="3.2.1.26"/>
    </reaction>
</comment>
<comment type="subcellular location">
    <subcellularLocation>
        <location evidence="3">Plastid</location>
        <location evidence="3">Chloroplast</location>
    </subcellularLocation>
</comment>
<comment type="tissue specificity">
    <text evidence="3">Expressed in roots, leaves and flowers.</text>
</comment>
<comment type="disruption phenotype">
    <text evidence="3">No visible phenotype under normal growth conditions, but the mutant plants accumulate decreased amount of starch during the day.</text>
</comment>
<comment type="similarity">
    <text evidence="6">Belongs to the glycosyl hydrolase 100 family.</text>
</comment>
<name>INVE_ARATH</name>
<dbReference type="EC" id="3.2.1.26" evidence="4"/>
<dbReference type="EMBL" id="AB012244">
    <property type="protein sequence ID" value="BAB09123.1"/>
    <property type="molecule type" value="Genomic_DNA"/>
</dbReference>
<dbReference type="EMBL" id="CP002688">
    <property type="protein sequence ID" value="AED93035.1"/>
    <property type="molecule type" value="Genomic_DNA"/>
</dbReference>
<dbReference type="EMBL" id="CP002688">
    <property type="protein sequence ID" value="ANM71174.1"/>
    <property type="molecule type" value="Genomic_DNA"/>
</dbReference>
<dbReference type="EMBL" id="AY056449">
    <property type="protein sequence ID" value="AAL08305.1"/>
    <property type="molecule type" value="mRNA"/>
</dbReference>
<dbReference type="EMBL" id="BT046120">
    <property type="protein sequence ID" value="ACI46508.1"/>
    <property type="molecule type" value="mRNA"/>
</dbReference>
<dbReference type="SMR" id="Q9FK88"/>
<dbReference type="FunCoup" id="Q9FK88">
    <property type="interactions" value="1023"/>
</dbReference>
<dbReference type="STRING" id="3702.Q9FK88"/>
<dbReference type="CAZy" id="GH100">
    <property type="family name" value="Glycoside Hydrolase Family 100"/>
</dbReference>
<dbReference type="PaxDb" id="3702-AT5G22510.1"/>
<dbReference type="ProMEX" id="Q9FK88"/>
<dbReference type="ProteomicsDB" id="247033"/>
<dbReference type="EnsemblPlants" id="AT5G22510.1">
    <property type="protein sequence ID" value="AT5G22510.1"/>
    <property type="gene ID" value="AT5G22510"/>
</dbReference>
<dbReference type="EnsemblPlants" id="AT5G22510.2">
    <property type="protein sequence ID" value="AT5G22510.2"/>
    <property type="gene ID" value="AT5G22510"/>
</dbReference>
<dbReference type="GeneID" id="832312"/>
<dbReference type="Gramene" id="AT5G22510.1">
    <property type="protein sequence ID" value="AT5G22510.1"/>
    <property type="gene ID" value="AT5G22510"/>
</dbReference>
<dbReference type="Gramene" id="AT5G22510.2">
    <property type="protein sequence ID" value="AT5G22510.2"/>
    <property type="gene ID" value="AT5G22510"/>
</dbReference>
<dbReference type="KEGG" id="ath:AT5G22510"/>
<dbReference type="Araport" id="AT5G22510"/>
<dbReference type="TAIR" id="AT5G22510">
    <property type="gene designation" value="INV-E"/>
</dbReference>
<dbReference type="eggNOG" id="ENOG502QPZ2">
    <property type="taxonomic scope" value="Eukaryota"/>
</dbReference>
<dbReference type="HOGENOM" id="CLU_020846_1_0_1"/>
<dbReference type="InParanoid" id="Q9FK88"/>
<dbReference type="OMA" id="RCTNSHE"/>
<dbReference type="OrthoDB" id="2014030at2759"/>
<dbReference type="PhylomeDB" id="Q9FK88"/>
<dbReference type="PRO" id="PR:Q9FK88"/>
<dbReference type="Proteomes" id="UP000006548">
    <property type="component" value="Chromosome 5"/>
</dbReference>
<dbReference type="ExpressionAtlas" id="Q9FK88">
    <property type="expression patterns" value="baseline and differential"/>
</dbReference>
<dbReference type="GO" id="GO:0009507">
    <property type="term" value="C:chloroplast"/>
    <property type="evidence" value="ECO:0000314"/>
    <property type="project" value="TAIR"/>
</dbReference>
<dbReference type="GO" id="GO:0033926">
    <property type="term" value="F:endo-alpha-N-acetylgalactosaminidase activity"/>
    <property type="evidence" value="ECO:0007669"/>
    <property type="project" value="InterPro"/>
</dbReference>
<dbReference type="GO" id="GO:0004575">
    <property type="term" value="F:sucrose alpha-glucosidase activity"/>
    <property type="evidence" value="ECO:0000314"/>
    <property type="project" value="TAIR"/>
</dbReference>
<dbReference type="GO" id="GO:0048825">
    <property type="term" value="P:cotyledon development"/>
    <property type="evidence" value="ECO:0000315"/>
    <property type="project" value="TAIR"/>
</dbReference>
<dbReference type="GO" id="GO:0005982">
    <property type="term" value="P:starch metabolic process"/>
    <property type="evidence" value="ECO:0000315"/>
    <property type="project" value="TAIR"/>
</dbReference>
<dbReference type="GO" id="GO:0005987">
    <property type="term" value="P:sucrose catabolic process"/>
    <property type="evidence" value="ECO:0000314"/>
    <property type="project" value="TAIR"/>
</dbReference>
<dbReference type="FunFam" id="1.50.10.10:FF:000001">
    <property type="entry name" value="probable alkaline/neutral invertase B"/>
    <property type="match status" value="1"/>
</dbReference>
<dbReference type="Gene3D" id="1.50.10.10">
    <property type="match status" value="1"/>
</dbReference>
<dbReference type="InterPro" id="IPR008928">
    <property type="entry name" value="6-hairpin_glycosidase_sf"/>
</dbReference>
<dbReference type="InterPro" id="IPR012341">
    <property type="entry name" value="6hp_glycosidase-like_sf"/>
</dbReference>
<dbReference type="InterPro" id="IPR024746">
    <property type="entry name" value="Glyco_hydro_100"/>
</dbReference>
<dbReference type="PANTHER" id="PTHR31916">
    <property type="match status" value="1"/>
</dbReference>
<dbReference type="PANTHER" id="PTHR31916:SF36">
    <property type="entry name" value="ALKALINE_NEUTRAL INVERTASE E, CHLOROPLASTIC"/>
    <property type="match status" value="1"/>
</dbReference>
<dbReference type="Pfam" id="PF12899">
    <property type="entry name" value="Glyco_hydro_100"/>
    <property type="match status" value="1"/>
</dbReference>
<dbReference type="SUPFAM" id="SSF48208">
    <property type="entry name" value="Six-hairpin glycosidases"/>
    <property type="match status" value="1"/>
</dbReference>
<reference key="1">
    <citation type="journal article" date="1998" name="DNA Res.">
        <title>Structural analysis of Arabidopsis thaliana chromosome 5. VI. Sequence features of the regions of 1,367,185 bp covered by 19 physically assigned P1 and TAC clones.</title>
        <authorList>
            <person name="Kotani H."/>
            <person name="Nakamura Y."/>
            <person name="Sato S."/>
            <person name="Asamizu E."/>
            <person name="Kaneko T."/>
            <person name="Miyajima N."/>
            <person name="Tabata S."/>
        </authorList>
    </citation>
    <scope>NUCLEOTIDE SEQUENCE [LARGE SCALE GENOMIC DNA]</scope>
    <source>
        <strain>cv. Columbia</strain>
    </source>
</reference>
<reference key="2">
    <citation type="journal article" date="2017" name="Plant J.">
        <title>Araport11: a complete reannotation of the Arabidopsis thaliana reference genome.</title>
        <authorList>
            <person name="Cheng C.Y."/>
            <person name="Krishnakumar V."/>
            <person name="Chan A.P."/>
            <person name="Thibaud-Nissen F."/>
            <person name="Schobel S."/>
            <person name="Town C.D."/>
        </authorList>
    </citation>
    <scope>GENOME REANNOTATION</scope>
    <source>
        <strain>cv. Columbia</strain>
    </source>
</reference>
<reference key="3">
    <citation type="journal article" date="2003" name="Science">
        <title>Empirical analysis of transcriptional activity in the Arabidopsis genome.</title>
        <authorList>
            <person name="Yamada K."/>
            <person name="Lim J."/>
            <person name="Dale J.M."/>
            <person name="Chen H."/>
            <person name="Shinn P."/>
            <person name="Palm C.J."/>
            <person name="Southwick A.M."/>
            <person name="Wu H.C."/>
            <person name="Kim C.J."/>
            <person name="Nguyen M."/>
            <person name="Pham P.K."/>
            <person name="Cheuk R.F."/>
            <person name="Karlin-Newmann G."/>
            <person name="Liu S.X."/>
            <person name="Lam B."/>
            <person name="Sakano H."/>
            <person name="Wu T."/>
            <person name="Yu G."/>
            <person name="Miranda M."/>
            <person name="Quach H.L."/>
            <person name="Tripp M."/>
            <person name="Chang C.H."/>
            <person name="Lee J.M."/>
            <person name="Toriumi M.J."/>
            <person name="Chan M.M."/>
            <person name="Tang C.C."/>
            <person name="Onodera C.S."/>
            <person name="Deng J.M."/>
            <person name="Akiyama K."/>
            <person name="Ansari Y."/>
            <person name="Arakawa T."/>
            <person name="Banh J."/>
            <person name="Banno F."/>
            <person name="Bowser L."/>
            <person name="Brooks S.Y."/>
            <person name="Carninci P."/>
            <person name="Chao Q."/>
            <person name="Choy N."/>
            <person name="Enju A."/>
            <person name="Goldsmith A.D."/>
            <person name="Gurjal M."/>
            <person name="Hansen N.F."/>
            <person name="Hayashizaki Y."/>
            <person name="Johnson-Hopson C."/>
            <person name="Hsuan V.W."/>
            <person name="Iida K."/>
            <person name="Karnes M."/>
            <person name="Khan S."/>
            <person name="Koesema E."/>
            <person name="Ishida J."/>
            <person name="Jiang P.X."/>
            <person name="Jones T."/>
            <person name="Kawai J."/>
            <person name="Kamiya A."/>
            <person name="Meyers C."/>
            <person name="Nakajima M."/>
            <person name="Narusaka M."/>
            <person name="Seki M."/>
            <person name="Sakurai T."/>
            <person name="Satou M."/>
            <person name="Tamse R."/>
            <person name="Vaysberg M."/>
            <person name="Wallender E.K."/>
            <person name="Wong C."/>
            <person name="Yamamura Y."/>
            <person name="Yuan S."/>
            <person name="Shinozaki K."/>
            <person name="Davis R.W."/>
            <person name="Theologis A."/>
            <person name="Ecker J.R."/>
        </authorList>
    </citation>
    <scope>NUCLEOTIDE SEQUENCE [LARGE SCALE MRNA]</scope>
    <source>
        <strain>cv. Columbia</strain>
    </source>
</reference>
<reference key="4">
    <citation type="submission" date="2008-10" db="EMBL/GenBank/DDBJ databases">
        <title>Arabidopsis ORF clones.</title>
        <authorList>
            <person name="De Los Reyes C."/>
            <person name="Quan R."/>
            <person name="Chen H."/>
            <person name="Bautista V.R."/>
            <person name="Kim C.J."/>
            <person name="Ecker J.R."/>
        </authorList>
    </citation>
    <scope>NUCLEOTIDE SEQUENCE [LARGE SCALE MRNA]</scope>
    <source>
        <strain>cv. Columbia</strain>
    </source>
</reference>
<reference key="5">
    <citation type="journal article" date="2008" name="Planta">
        <title>New insights on sucrose metabolism: evidence for an active A/N-Inv in chloroplasts uncovers a novel component of the intracellular carbon trafficking.</title>
        <authorList>
            <person name="Vargas W.A."/>
            <person name="Pontis H.G."/>
            <person name="Salerno G.L."/>
        </authorList>
    </citation>
    <scope>FUNCTION</scope>
    <scope>SUBCELLULAR LOCATION</scope>
    <scope>TISSUE SPECIFICITY</scope>
    <scope>DISRUPTION PHENOTYPE</scope>
</reference>
<reference key="6">
    <citation type="journal article" date="2010" name="J. Biol. Chem.">
        <title>Point mutation of a plastidic invertase inhibits development of the photosynthetic apparatus and enhances nitrate assimilation in sugar-treated Arabidopsis seedlings.</title>
        <authorList>
            <person name="Tamoi M."/>
            <person name="Tabuchi T."/>
            <person name="Demuratani M."/>
            <person name="Otori K."/>
            <person name="Tanabe N."/>
            <person name="Maruta T."/>
            <person name="Shigeoka S."/>
        </authorList>
    </citation>
    <scope>FUNCTION</scope>
    <scope>CATALYTIC ACTIVITY</scope>
    <scope>MUTAGENESIS OF CYS-294</scope>
</reference>
<reference key="7">
    <citation type="journal article" date="2011" name="J. Exp. Bot.">
        <title>Exploring the neutral invertase-oxidative stress defence connection in Arabidopsis thaliana.</title>
        <authorList>
            <person name="Xiang L."/>
            <person name="Le Roy K."/>
            <person name="Bolouri-Moghaddam M.R."/>
            <person name="Vanhaecke M."/>
            <person name="Lammens W."/>
            <person name="Rolland F."/>
            <person name="Van den Ende W."/>
        </authorList>
    </citation>
    <scope>GENE FAMILY</scope>
</reference>
<accession>Q9FK88</accession>
<gene>
    <name evidence="5" type="primary">INVE</name>
    <name evidence="7" type="ordered locus">At5g22510</name>
    <name evidence="8" type="ORF">MQJ16.5</name>
</gene>
<sequence length="617" mass="69240">MAASETVLRVPLGSVSQSCYLASFFVNSTPNLSFKPVSRNRKTVRCTNSHEVSSVPKHSFHSSNSVLKGKKFVSTICKCQKHDVEESIRSTLLPSDGLSSELKSDLDEMPLPVNGSVSSNGNAQSVGTKSIEDEAWDLLRQSVVFYCGSPIGTIAANDPNSTSVLNYDQVFIRDFIPSGIAFLLKGEYDIVRNFILYTLQLQSWEKTMDCHSPGQGLMPCSFKVKTVPLDGDDSMTEEVLDPDFGEAAIGRVAPVDSGLWWIILLRAYGKCTGDLSVQERVDVQTGIKMILKLCLADGFDMFPTLLVTDGSCMIDRRMGIHGHPLEIQALFYSALVCAREMLTPEDGSADLIRALNNRLVALNFHIREYYWLDLKKINEIYRYQTEEYSYDAVNKFNIYPDQIPSWLVDFMPNRGGYLIGNLQPAHMDFRFFTLGNLWSIVSSLASNDQSHAILDFIEAKWAELVADMPLKICYPAMEGEEWRIITGSDPKNTPWSYHNGGAWPTLLWQLTVASIKMGRPEIAEKAVELAERRISLDKWPEYYDTKRARFIGKQARLYQTWSIAGYLVAKLLLANPAAAKFLTSEEDSDLRNAFSCMLSANPRRTRGPKKAQQPFIV</sequence>
<keyword id="KW-0119">Carbohydrate metabolism</keyword>
<keyword id="KW-0150">Chloroplast</keyword>
<keyword id="KW-0326">Glycosidase</keyword>
<keyword id="KW-0378">Hydrolase</keyword>
<keyword id="KW-0597">Phosphoprotein</keyword>
<keyword id="KW-0934">Plastid</keyword>
<keyword id="KW-1185">Reference proteome</keyword>
<keyword id="KW-0809">Transit peptide</keyword>
<evidence type="ECO:0000250" key="1">
    <source>
        <dbReference type="UniProtKB" id="Q9LQF2"/>
    </source>
</evidence>
<evidence type="ECO:0000255" key="2"/>
<evidence type="ECO:0000269" key="3">
    <source>
    </source>
</evidence>
<evidence type="ECO:0000269" key="4">
    <source>
    </source>
</evidence>
<evidence type="ECO:0000303" key="5">
    <source>
    </source>
</evidence>
<evidence type="ECO:0000305" key="6"/>
<evidence type="ECO:0000312" key="7">
    <source>
        <dbReference type="Araport" id="AT5G22510"/>
    </source>
</evidence>
<evidence type="ECO:0000312" key="8">
    <source>
        <dbReference type="EMBL" id="BAB09123.1"/>
    </source>
</evidence>
<feature type="transit peptide" description="Chloroplast" evidence="2">
    <location>
        <begin position="1"/>
        <end position="45"/>
    </location>
</feature>
<feature type="chain" id="PRO_0000431501" description="Alkaline/neutral invertase E, chloroplastic" evidence="2">
    <location>
        <begin position="46"/>
        <end position="617"/>
    </location>
</feature>
<feature type="modified residue" description="Phosphoserine" evidence="1">
    <location>
        <position position="87"/>
    </location>
</feature>
<feature type="mutagenesis site" description="In sicy-192; inhibition of cotyledon greening when treated with sucrose; no effect on enzymatic activity." evidence="4">
    <original>C</original>
    <variation>Y</variation>
    <location>
        <position position="294"/>
    </location>
</feature>
<proteinExistence type="evidence at protein level"/>
<organism>
    <name type="scientific">Arabidopsis thaliana</name>
    <name type="common">Mouse-ear cress</name>
    <dbReference type="NCBI Taxonomy" id="3702"/>
    <lineage>
        <taxon>Eukaryota</taxon>
        <taxon>Viridiplantae</taxon>
        <taxon>Streptophyta</taxon>
        <taxon>Embryophyta</taxon>
        <taxon>Tracheophyta</taxon>
        <taxon>Spermatophyta</taxon>
        <taxon>Magnoliopsida</taxon>
        <taxon>eudicotyledons</taxon>
        <taxon>Gunneridae</taxon>
        <taxon>Pentapetalae</taxon>
        <taxon>rosids</taxon>
        <taxon>malvids</taxon>
        <taxon>Brassicales</taxon>
        <taxon>Brassicaceae</taxon>
        <taxon>Camelineae</taxon>
        <taxon>Arabidopsis</taxon>
    </lineage>
</organism>